<evidence type="ECO:0000250" key="1">
    <source>
        <dbReference type="UniProtKB" id="Q6UWZ7"/>
    </source>
</evidence>
<evidence type="ECO:0000255" key="2"/>
<evidence type="ECO:0000255" key="3">
    <source>
        <dbReference type="PROSITE-ProRule" id="PRU01182"/>
    </source>
</evidence>
<evidence type="ECO:0000256" key="4">
    <source>
        <dbReference type="SAM" id="MobiDB-lite"/>
    </source>
</evidence>
<evidence type="ECO:0000303" key="5">
    <source>
    </source>
</evidence>
<evidence type="ECO:0000305" key="6"/>
<sequence>MEGESTSALLSGFVFGALAFQHLSTDSDTEGFLLGDVKGEAKNSITDSQMDDVEVVYTIDIQKHIPCYQLFSFYNSAGELNEPALKKILSGRKKSVIGWYKFRRNTDQIMTFRERLLHKNLQSHLSNQGLVFLLLTSSVMTESCSTYRLEHALHRPQEGLFQKVPLVVTNLGMAEQQGYRTVSGSCASSGFVRAVKQHRSEFFYEDGSLQEVHKINEMYATLQEELKKMCSDVEVSERSVEKLLTEVSQLKEEINRKKQHKISSGGNKDQLEEPKENVLLCQALRTFFPSSDLQTCIVSFKGRISKNCCKIDHNINIMDKLTLMVEERDFTEAETKLVTKRKVRVTTTGPKSLKKLRSLQLDQELHQDEEDCNQETKLALSSAETDEEALENPKDTNEYSYSPTF</sequence>
<organism>
    <name type="scientific">Gallus gallus</name>
    <name type="common">Chicken</name>
    <dbReference type="NCBI Taxonomy" id="9031"/>
    <lineage>
        <taxon>Eukaryota</taxon>
        <taxon>Metazoa</taxon>
        <taxon>Chordata</taxon>
        <taxon>Craniata</taxon>
        <taxon>Vertebrata</taxon>
        <taxon>Euteleostomi</taxon>
        <taxon>Archelosauria</taxon>
        <taxon>Archosauria</taxon>
        <taxon>Dinosauria</taxon>
        <taxon>Saurischia</taxon>
        <taxon>Theropoda</taxon>
        <taxon>Coelurosauria</taxon>
        <taxon>Aves</taxon>
        <taxon>Neognathae</taxon>
        <taxon>Galloanserae</taxon>
        <taxon>Galliformes</taxon>
        <taxon>Phasianidae</taxon>
        <taxon>Phasianinae</taxon>
        <taxon>Gallus</taxon>
    </lineage>
</organism>
<comment type="function">
    <text evidence="1">Involved in DNA damage response and double-strand break (DSB) repair. Component of the BRCA1-A complex, acting as a central scaffold protein that assembles the various components of the complex and mediates the recruitment of BRCA1. The BRCA1-A complex specifically recognizes 'Lys-63'-linked ubiquitinated histones H2A and H2AX at DNA lesion sites, leading to target the BRCA1-BARD1 heterodimer to sites of DNA damage at DSBs. This complex also possesses deubiquitinase activity that specifically removes 'Lys-63'-linked ubiquitin on histones H2A and H2AX.</text>
</comment>
<comment type="subunit">
    <text evidence="1">Component of the BRCA1-A complex. Component of the BRISC complex. Homodimer. Interacts directly (when phosphorylated at Ser-402) with BRCA1. The phosphorylated homodimer can interact directly with two BRCA1 chains, giving rise to a heterotetramer (By similarity).</text>
</comment>
<comment type="subcellular location">
    <subcellularLocation>
        <location evidence="1">Nucleus</location>
    </subcellularLocation>
    <text evidence="1">Localizes at sites of DNA damage at double-strand breaks (DSBs).</text>
</comment>
<comment type="alternative products">
    <event type="alternative splicing"/>
    <isoform>
        <id>Q5ZHS0-1</id>
        <name>1</name>
        <sequence type="displayed"/>
    </isoform>
    <isoform>
        <id>Q5ZHS0-2</id>
        <name>2</name>
        <sequence type="described" ref="VSP_037282"/>
    </isoform>
</comment>
<comment type="PTM">
    <text evidence="1">Phosphorylation of Ser-402 of the pSXXF motif by ATM or ATR constitutes a specific recognition motif for the BRCT domain of BRCA1.</text>
</comment>
<comment type="similarity">
    <text evidence="6">Belongs to the FAM175 family. Abraxas subfamily.</text>
</comment>
<dbReference type="EMBL" id="AJ721064">
    <property type="protein sequence ID" value="CAG32723.1"/>
    <property type="molecule type" value="mRNA"/>
</dbReference>
<dbReference type="SMR" id="Q5ZHS0"/>
<dbReference type="FunCoup" id="Q5ZHS0">
    <property type="interactions" value="435"/>
</dbReference>
<dbReference type="STRING" id="9031.ENSGALP00000018259"/>
<dbReference type="PaxDb" id="9031-ENSGALP00000018259"/>
<dbReference type="VEuPathDB" id="HostDB:geneid_422608"/>
<dbReference type="eggNOG" id="ENOG502QVCD">
    <property type="taxonomic scope" value="Eukaryota"/>
</dbReference>
<dbReference type="InParanoid" id="Q5ZHS0"/>
<dbReference type="PhylomeDB" id="Q5ZHS0"/>
<dbReference type="Proteomes" id="UP000000539">
    <property type="component" value="Unassembled WGS sequence"/>
</dbReference>
<dbReference type="GO" id="GO:0070531">
    <property type="term" value="C:BRCA1-A complex"/>
    <property type="evidence" value="ECO:0000250"/>
    <property type="project" value="UniProtKB"/>
</dbReference>
<dbReference type="GO" id="GO:0005634">
    <property type="term" value="C:nucleus"/>
    <property type="evidence" value="ECO:0000250"/>
    <property type="project" value="UniProtKB"/>
</dbReference>
<dbReference type="GO" id="GO:0008017">
    <property type="term" value="F:microtubule binding"/>
    <property type="evidence" value="ECO:0000318"/>
    <property type="project" value="GO_Central"/>
</dbReference>
<dbReference type="GO" id="GO:0031593">
    <property type="term" value="F:polyubiquitin modification-dependent protein binding"/>
    <property type="evidence" value="ECO:0000250"/>
    <property type="project" value="UniProtKB"/>
</dbReference>
<dbReference type="GO" id="GO:0008608">
    <property type="term" value="P:attachment of spindle microtubules to kinetochore"/>
    <property type="evidence" value="ECO:0000318"/>
    <property type="project" value="GO_Central"/>
</dbReference>
<dbReference type="GO" id="GO:0006325">
    <property type="term" value="P:chromatin organization"/>
    <property type="evidence" value="ECO:0007669"/>
    <property type="project" value="UniProtKB-KW"/>
</dbReference>
<dbReference type="GO" id="GO:0006302">
    <property type="term" value="P:double-strand break repair"/>
    <property type="evidence" value="ECO:0000250"/>
    <property type="project" value="UniProtKB"/>
</dbReference>
<dbReference type="GO" id="GO:0007095">
    <property type="term" value="P:mitotic G2 DNA damage checkpoint signaling"/>
    <property type="evidence" value="ECO:0000250"/>
    <property type="project" value="UniProtKB"/>
</dbReference>
<dbReference type="GO" id="GO:0090307">
    <property type="term" value="P:mitotic spindle assembly"/>
    <property type="evidence" value="ECO:0000318"/>
    <property type="project" value="GO_Central"/>
</dbReference>
<dbReference type="GO" id="GO:0045739">
    <property type="term" value="P:positive regulation of DNA repair"/>
    <property type="evidence" value="ECO:0000250"/>
    <property type="project" value="UniProtKB"/>
</dbReference>
<dbReference type="GO" id="GO:0010212">
    <property type="term" value="P:response to ionizing radiation"/>
    <property type="evidence" value="ECO:0000250"/>
    <property type="project" value="UniProtKB"/>
</dbReference>
<dbReference type="CDD" id="cd23523">
    <property type="entry name" value="Abraxas_1"/>
    <property type="match status" value="1"/>
</dbReference>
<dbReference type="InterPro" id="IPR023239">
    <property type="entry name" value="BRISC_Abraxas1"/>
</dbReference>
<dbReference type="InterPro" id="IPR023238">
    <property type="entry name" value="FAM175"/>
</dbReference>
<dbReference type="InterPro" id="IPR037518">
    <property type="entry name" value="MPN"/>
</dbReference>
<dbReference type="PANTHER" id="PTHR31728">
    <property type="entry name" value="ABRAXAS FAMILY MEMBER"/>
    <property type="match status" value="1"/>
</dbReference>
<dbReference type="PANTHER" id="PTHR31728:SF2">
    <property type="entry name" value="BRCA1-A COMPLEX SUBUNIT ABRAXAS 1"/>
    <property type="match status" value="1"/>
</dbReference>
<dbReference type="Pfam" id="PF21125">
    <property type="entry name" value="MPN_2A_DUB_like"/>
    <property type="match status" value="1"/>
</dbReference>
<dbReference type="PRINTS" id="PR02052">
    <property type="entry name" value="ABRAXAS"/>
</dbReference>
<dbReference type="PRINTS" id="PR02051">
    <property type="entry name" value="PROTEINF175"/>
</dbReference>
<dbReference type="PROSITE" id="PS50249">
    <property type="entry name" value="MPN"/>
    <property type="match status" value="1"/>
</dbReference>
<accession>Q5ZHS0</accession>
<reference key="1">
    <citation type="journal article" date="2005" name="Genome Biol.">
        <title>Full-length cDNAs from chicken bursal lymphocytes to facilitate gene function analysis.</title>
        <authorList>
            <person name="Caldwell R.B."/>
            <person name="Kierzek A.M."/>
            <person name="Arakawa H."/>
            <person name="Bezzubov Y."/>
            <person name="Zaim J."/>
            <person name="Fiedler P."/>
            <person name="Kutter S."/>
            <person name="Blagodatski A."/>
            <person name="Kostovska D."/>
            <person name="Koter M."/>
            <person name="Plachy J."/>
            <person name="Carninci P."/>
            <person name="Hayashizaki Y."/>
            <person name="Buerstedde J.-M."/>
        </authorList>
    </citation>
    <scope>NUCLEOTIDE SEQUENCE [LARGE SCALE MRNA] (ISOFORM 2)</scope>
    <source>
        <strain>CB</strain>
        <tissue>Bursa of Fabricius</tissue>
    </source>
</reference>
<reference key="2">
    <citation type="journal article" date="2004" name="Nature">
        <title>Sequence and comparative analysis of the chicken genome provide unique perspectives on vertebrate evolution.</title>
        <authorList>
            <person name="Hillier L.W."/>
            <person name="Miller W."/>
            <person name="Birney E."/>
            <person name="Warren W."/>
            <person name="Hardison R.C."/>
            <person name="Ponting C.P."/>
            <person name="Bork P."/>
            <person name="Burt D.W."/>
            <person name="Groenen M.A.M."/>
            <person name="Delany M.E."/>
            <person name="Dodgson J.B."/>
            <person name="Chinwalla A.T."/>
            <person name="Cliften P.F."/>
            <person name="Clifton S.W."/>
            <person name="Delehaunty K.D."/>
            <person name="Fronick C."/>
            <person name="Fulton R.S."/>
            <person name="Graves T.A."/>
            <person name="Kremitzki C."/>
            <person name="Layman D."/>
            <person name="Magrini V."/>
            <person name="McPherson J.D."/>
            <person name="Miner T.L."/>
            <person name="Minx P."/>
            <person name="Nash W.E."/>
            <person name="Nhan M.N."/>
            <person name="Nelson J.O."/>
            <person name="Oddy L.G."/>
            <person name="Pohl C.S."/>
            <person name="Randall-Maher J."/>
            <person name="Smith S.M."/>
            <person name="Wallis J.W."/>
            <person name="Yang S.-P."/>
            <person name="Romanov M.N."/>
            <person name="Rondelli C.M."/>
            <person name="Paton B."/>
            <person name="Smith J."/>
            <person name="Morrice D."/>
            <person name="Daniels L."/>
            <person name="Tempest H.G."/>
            <person name="Robertson L."/>
            <person name="Masabanda J.S."/>
            <person name="Griffin D.K."/>
            <person name="Vignal A."/>
            <person name="Fillon V."/>
            <person name="Jacobbson L."/>
            <person name="Kerje S."/>
            <person name="Andersson L."/>
            <person name="Crooijmans R.P."/>
            <person name="Aerts J."/>
            <person name="van der Poel J.J."/>
            <person name="Ellegren H."/>
            <person name="Caldwell R.B."/>
            <person name="Hubbard S.J."/>
            <person name="Grafham D.V."/>
            <person name="Kierzek A.M."/>
            <person name="McLaren S.R."/>
            <person name="Overton I.M."/>
            <person name="Arakawa H."/>
            <person name="Beattie K.J."/>
            <person name="Bezzubov Y."/>
            <person name="Boardman P.E."/>
            <person name="Bonfield J.K."/>
            <person name="Croning M.D.R."/>
            <person name="Davies R.M."/>
            <person name="Francis M.D."/>
            <person name="Humphray S.J."/>
            <person name="Scott C.E."/>
            <person name="Taylor R.G."/>
            <person name="Tickle C."/>
            <person name="Brown W.R.A."/>
            <person name="Rogers J."/>
            <person name="Buerstedde J.-M."/>
            <person name="Wilson S.A."/>
            <person name="Stubbs L."/>
            <person name="Ovcharenko I."/>
            <person name="Gordon L."/>
            <person name="Lucas S."/>
            <person name="Miller M.M."/>
            <person name="Inoko H."/>
            <person name="Shiina T."/>
            <person name="Kaufman J."/>
            <person name="Salomonsen J."/>
            <person name="Skjoedt K."/>
            <person name="Wong G.K.-S."/>
            <person name="Wang J."/>
            <person name="Liu B."/>
            <person name="Wang J."/>
            <person name="Yu J."/>
            <person name="Yang H."/>
            <person name="Nefedov M."/>
            <person name="Koriabine M."/>
            <person name="Dejong P.J."/>
            <person name="Goodstadt L."/>
            <person name="Webber C."/>
            <person name="Dickens N.J."/>
            <person name="Letunic I."/>
            <person name="Suyama M."/>
            <person name="Torrents D."/>
            <person name="von Mering C."/>
            <person name="Zdobnov E.M."/>
            <person name="Makova K."/>
            <person name="Nekrutenko A."/>
            <person name="Elnitski L."/>
            <person name="Eswara P."/>
            <person name="King D.C."/>
            <person name="Yang S.-P."/>
            <person name="Tyekucheva S."/>
            <person name="Radakrishnan A."/>
            <person name="Harris R.S."/>
            <person name="Chiaromonte F."/>
            <person name="Taylor J."/>
            <person name="He J."/>
            <person name="Rijnkels M."/>
            <person name="Griffiths-Jones S."/>
            <person name="Ureta-Vidal A."/>
            <person name="Hoffman M.M."/>
            <person name="Severin J."/>
            <person name="Searle S.M.J."/>
            <person name="Law A.S."/>
            <person name="Speed D."/>
            <person name="Waddington D."/>
            <person name="Cheng Z."/>
            <person name="Tuzun E."/>
            <person name="Eichler E."/>
            <person name="Bao Z."/>
            <person name="Flicek P."/>
            <person name="Shteynberg D.D."/>
            <person name="Brent M.R."/>
            <person name="Bye J.M."/>
            <person name="Huckle E.J."/>
            <person name="Chatterji S."/>
            <person name="Dewey C."/>
            <person name="Pachter L."/>
            <person name="Kouranov A."/>
            <person name="Mourelatos Z."/>
            <person name="Hatzigeorgiou A.G."/>
            <person name="Paterson A.H."/>
            <person name="Ivarie R."/>
            <person name="Brandstrom M."/>
            <person name="Axelsson E."/>
            <person name="Backstrom N."/>
            <person name="Berlin S."/>
            <person name="Webster M.T."/>
            <person name="Pourquie O."/>
            <person name="Reymond A."/>
            <person name="Ucla C."/>
            <person name="Antonarakis S.E."/>
            <person name="Long M."/>
            <person name="Emerson J.J."/>
            <person name="Betran E."/>
            <person name="Dupanloup I."/>
            <person name="Kaessmann H."/>
            <person name="Hinrichs A.S."/>
            <person name="Bejerano G."/>
            <person name="Furey T.S."/>
            <person name="Harte R.A."/>
            <person name="Raney B."/>
            <person name="Siepel A."/>
            <person name="Kent W.J."/>
            <person name="Haussler D."/>
            <person name="Eyras E."/>
            <person name="Castelo R."/>
            <person name="Abril J.F."/>
            <person name="Castellano S."/>
            <person name="Camara F."/>
            <person name="Parra G."/>
            <person name="Guigo R."/>
            <person name="Bourque G."/>
            <person name="Tesler G."/>
            <person name="Pevzner P.A."/>
            <person name="Smit A."/>
            <person name="Fulton L.A."/>
            <person name="Mardis E.R."/>
            <person name="Wilson R.K."/>
        </authorList>
    </citation>
    <scope>NUCLEOTIDE SEQUENCE [LARGE SCALE GENOMIC DNA]</scope>
    <source>
        <strain>Red jungle fowl</strain>
    </source>
</reference>
<feature type="chain" id="PRO_0000373940" description="BRCA1-A complex subunit Abraxas 1">
    <location>
        <begin position="1"/>
        <end position="405"/>
    </location>
</feature>
<feature type="domain" description="MPN" evidence="3">
    <location>
        <begin position="7"/>
        <end position="153"/>
    </location>
</feature>
<feature type="region of interest" description="Disordered" evidence="4">
    <location>
        <begin position="365"/>
        <end position="405"/>
    </location>
</feature>
<feature type="coiled-coil region" evidence="2">
    <location>
        <begin position="208"/>
        <end position="262"/>
    </location>
</feature>
<feature type="short sequence motif" description="pSXXF motif" evidence="6">
    <location>
        <begin position="402"/>
        <end position="405"/>
    </location>
</feature>
<feature type="modified residue" description="Phosphoserine" evidence="1">
    <location>
        <position position="402"/>
    </location>
</feature>
<feature type="splice variant" id="VSP_037282" description="In isoform 2." evidence="5">
    <location>
        <begin position="160"/>
        <end position="405"/>
    </location>
</feature>
<protein>
    <recommendedName>
        <fullName evidence="1">BRCA1-A complex subunit Abraxas 1</fullName>
    </recommendedName>
    <alternativeName>
        <fullName>Coiled-coil domain-containing protein 98</fullName>
    </alternativeName>
    <alternativeName>
        <fullName>Protein FAM175A</fullName>
    </alternativeName>
</protein>
<name>ABRX1_CHICK</name>
<keyword id="KW-0025">Alternative splicing</keyword>
<keyword id="KW-0156">Chromatin regulator</keyword>
<keyword id="KW-0175">Coiled coil</keyword>
<keyword id="KW-0227">DNA damage</keyword>
<keyword id="KW-0234">DNA repair</keyword>
<keyword id="KW-0539">Nucleus</keyword>
<keyword id="KW-0597">Phosphoprotein</keyword>
<keyword id="KW-1185">Reference proteome</keyword>
<gene>
    <name evidence="1" type="primary">ABRAXAS1</name>
    <name type="synonym">ABRA1</name>
    <name type="synonym">CCDC98</name>
    <name type="synonym">FAM175A</name>
    <name type="ORF">RCJMB04_33o10</name>
</gene>
<proteinExistence type="evidence at transcript level"/>